<evidence type="ECO:0000250" key="1"/>
<evidence type="ECO:0000305" key="2"/>
<organism>
    <name type="scientific">Mycoplasma genitalium (strain ATCC 33530 / DSM 19775 / NCTC 10195 / G37)</name>
    <name type="common">Mycoplasmoides genitalium</name>
    <dbReference type="NCBI Taxonomy" id="243273"/>
    <lineage>
        <taxon>Bacteria</taxon>
        <taxon>Bacillati</taxon>
        <taxon>Mycoplasmatota</taxon>
        <taxon>Mycoplasmoidales</taxon>
        <taxon>Mycoplasmoidaceae</taxon>
        <taxon>Mycoplasmoides</taxon>
    </lineage>
</organism>
<comment type="function">
    <text evidence="1">Provides the precursors necessary for DNA synthesis. Catalyzes the biosynthesis of deoxyribonucleotides from the corresponding ribonucleotides (By similarity).</text>
</comment>
<comment type="catalytic activity">
    <reaction>
        <text>a 2'-deoxyribonucleoside 5'-diphosphate + [thioredoxin]-disulfide + H2O = a ribonucleoside 5'-diphosphate + [thioredoxin]-dithiol</text>
        <dbReference type="Rhea" id="RHEA:23252"/>
        <dbReference type="Rhea" id="RHEA-COMP:10698"/>
        <dbReference type="Rhea" id="RHEA-COMP:10700"/>
        <dbReference type="ChEBI" id="CHEBI:15377"/>
        <dbReference type="ChEBI" id="CHEBI:29950"/>
        <dbReference type="ChEBI" id="CHEBI:50058"/>
        <dbReference type="ChEBI" id="CHEBI:57930"/>
        <dbReference type="ChEBI" id="CHEBI:73316"/>
        <dbReference type="EC" id="1.17.4.1"/>
    </reaction>
</comment>
<comment type="activity regulation">
    <text evidence="1">Under complex allosteric control mediated by deoxynucleoside triphosphates and ATP binding. The type of nucleotide bound at the specificity site determines substrate preference. It seems probable that ATP makes the enzyme reduce CDP and UDP, dGTP favors ADP reduction and dTTP favors GDP reduction (By similarity).</text>
</comment>
<comment type="subunit">
    <text evidence="1">Tetramer of two alpha and two beta subunits.</text>
</comment>
<comment type="similarity">
    <text evidence="2">Belongs to the ribonucleoside diphosphate reductase large chain family.</text>
</comment>
<keyword id="KW-0021">Allosteric enzyme</keyword>
<keyword id="KW-0067">ATP-binding</keyword>
<keyword id="KW-0215">Deoxyribonucleotide synthesis</keyword>
<keyword id="KW-1015">Disulfide bond</keyword>
<keyword id="KW-0547">Nucleotide-binding</keyword>
<keyword id="KW-0560">Oxidoreductase</keyword>
<keyword id="KW-1185">Reference proteome</keyword>
<proteinExistence type="inferred from homology"/>
<name>RIR1_MYCGE</name>
<gene>
    <name type="primary">nrdE</name>
    <name type="ordered locus">MG231</name>
</gene>
<accession>P47473</accession>
<protein>
    <recommendedName>
        <fullName>Ribonucleoside-diphosphate reductase subunit alpha</fullName>
        <ecNumber>1.17.4.1</ecNumber>
    </recommendedName>
    <alternativeName>
        <fullName>Ribonucleotide reductase</fullName>
    </alternativeName>
</protein>
<sequence>MTSKEKIPTFNTEEDVESYISFNAQAKIYDDFAIDLQAVESYIQEHVKPKTKVFHSTKERLDFLIKNDYYDEKIINMYSFEQFEEITHKAYSYRFRYANFMGAFKFYNAYALKTFDGKYYLENYEDRVVMNVLMLANGNFNKALKLLKQIILNRFQPATPTFLNAGRKKRGEFVSCYLLRIEDNMESIGRAITTTLQLSKRDGGVALLLSNLREAGAPIKKIENQSSGIIPIMKLLEDSFSYSNQLGQRQGAGAVYLHCHHPDVMQFLDTKRENADEKIRIKSLSLGLVIPDITFQLAKNNEMMALFSPYDIYQEYGKALSDISVTEMYYELLENQRIKKTFISARKFFQTIAELHFESGYPYILFDDTVNRRNAHKNRIVMSNLCSEIVQPSLPSEFYSDLTFKKVGSDISCNLGSLNIARAMESGSELAELIQLAIESLDLVSRISSLETAPSIKKGNSENHALGLGAMNLHGFLATNAIYYDSKEAVDFTNIFFYTVAYHAFSASNKLALELGKFKDFENTKFADGSYFDKYTKVASDFWTCKTEKVQALFDKYQVKIPTQENWKQLVASIQKDGLANSHLMAIAPTGSISYLSSCTPSLQPVVSPVEVRKEGKLGRIYVPAYKLDNDNYQYFKDGAYELGFEPIINIVAAAQQHVDQAISLTLFMTDKATTRDLNKAYIYAFKKGCSSIYYVRVRQDVLKDSEDHTIKIKDCEVCSI</sequence>
<feature type="chain" id="PRO_0000187217" description="Ribonucleoside-diphosphate reductase subunit alpha">
    <location>
        <begin position="1"/>
        <end position="721"/>
    </location>
</feature>
<feature type="active site" description="Proton acceptor" evidence="1">
    <location>
        <position position="384"/>
    </location>
</feature>
<feature type="active site" description="Cysteine radical intermediate" evidence="1">
    <location>
        <position position="386"/>
    </location>
</feature>
<feature type="active site" description="Proton acceptor" evidence="1">
    <location>
        <position position="388"/>
    </location>
</feature>
<feature type="binding site" evidence="1">
    <location>
        <position position="159"/>
    </location>
    <ligand>
        <name>substrate</name>
    </ligand>
</feature>
<feature type="binding site" evidence="1">
    <location>
        <begin position="175"/>
        <end position="176"/>
    </location>
    <ligand>
        <name>substrate</name>
    </ligand>
</feature>
<feature type="binding site" evidence="1">
    <location>
        <position position="204"/>
    </location>
    <ligand>
        <name>substrate</name>
    </ligand>
</feature>
<feature type="binding site" evidence="1">
    <location>
        <begin position="384"/>
        <end position="388"/>
    </location>
    <ligand>
        <name>substrate</name>
    </ligand>
</feature>
<feature type="binding site" evidence="1">
    <location>
        <begin position="589"/>
        <end position="593"/>
    </location>
    <ligand>
        <name>substrate</name>
    </ligand>
</feature>
<feature type="site" description="Important for hydrogen atom transfer" evidence="1">
    <location>
        <position position="176"/>
    </location>
</feature>
<feature type="site" description="Allosteric effector binding" evidence="1">
    <location>
        <position position="183"/>
    </location>
</feature>
<feature type="site" description="Allosteric effector binding" evidence="1">
    <location>
        <position position="213"/>
    </location>
</feature>
<feature type="site" description="Important for hydrogen atom transfer" evidence="1">
    <location>
        <position position="413"/>
    </location>
</feature>
<feature type="site" description="Important for electron transfer" evidence="1">
    <location>
        <position position="694"/>
    </location>
</feature>
<feature type="site" description="Important for electron transfer" evidence="1">
    <location>
        <position position="695"/>
    </location>
</feature>
<feature type="site" description="Interacts with thioredoxin/glutaredoxin" evidence="1">
    <location>
        <position position="716"/>
    </location>
</feature>
<feature type="site" description="Interacts with thioredoxin/glutaredoxin" evidence="1">
    <location>
        <position position="719"/>
    </location>
</feature>
<feature type="disulfide bond" description="Redox-active" evidence="1">
    <location>
        <begin position="176"/>
        <end position="413"/>
    </location>
</feature>
<reference key="1">
    <citation type="journal article" date="1995" name="Science">
        <title>The minimal gene complement of Mycoplasma genitalium.</title>
        <authorList>
            <person name="Fraser C.M."/>
            <person name="Gocayne J.D."/>
            <person name="White O."/>
            <person name="Adams M.D."/>
            <person name="Clayton R.A."/>
            <person name="Fleischmann R.D."/>
            <person name="Bult C.J."/>
            <person name="Kerlavage A.R."/>
            <person name="Sutton G.G."/>
            <person name="Kelley J.M."/>
            <person name="Fritchman J.L."/>
            <person name="Weidman J.F."/>
            <person name="Small K.V."/>
            <person name="Sandusky M."/>
            <person name="Fuhrmann J.L."/>
            <person name="Nguyen D.T."/>
            <person name="Utterback T.R."/>
            <person name="Saudek D.M."/>
            <person name="Phillips C.A."/>
            <person name="Merrick J.M."/>
            <person name="Tomb J.-F."/>
            <person name="Dougherty B.A."/>
            <person name="Bott K.F."/>
            <person name="Hu P.-C."/>
            <person name="Lucier T.S."/>
            <person name="Peterson S.N."/>
            <person name="Smith H.O."/>
            <person name="Hutchison C.A. III"/>
            <person name="Venter J.C."/>
        </authorList>
    </citation>
    <scope>NUCLEOTIDE SEQUENCE [LARGE SCALE GENOMIC DNA]</scope>
    <source>
        <strain>ATCC 33530 / DSM 19775 / NCTC 10195 / G37</strain>
    </source>
</reference>
<dbReference type="EC" id="1.17.4.1"/>
<dbReference type="EMBL" id="L43967">
    <property type="protein sequence ID" value="AAC71452.1"/>
    <property type="molecule type" value="Genomic_DNA"/>
</dbReference>
<dbReference type="PIR" id="E64225">
    <property type="entry name" value="E64225"/>
</dbReference>
<dbReference type="RefSeq" id="WP_009885768.1">
    <property type="nucleotide sequence ID" value="NC_000908.2"/>
</dbReference>
<dbReference type="SMR" id="P47473"/>
<dbReference type="FunCoup" id="P47473">
    <property type="interactions" value="161"/>
</dbReference>
<dbReference type="STRING" id="243273.MG_231"/>
<dbReference type="GeneID" id="88282377"/>
<dbReference type="KEGG" id="mge:MG_231"/>
<dbReference type="eggNOG" id="COG0209">
    <property type="taxonomic scope" value="Bacteria"/>
</dbReference>
<dbReference type="HOGENOM" id="CLU_000404_4_1_14"/>
<dbReference type="InParanoid" id="P47473"/>
<dbReference type="OrthoDB" id="9762933at2"/>
<dbReference type="BioCyc" id="MGEN243273:G1GJ2-278-MONOMER"/>
<dbReference type="Proteomes" id="UP000000807">
    <property type="component" value="Chromosome"/>
</dbReference>
<dbReference type="GO" id="GO:0005971">
    <property type="term" value="C:ribonucleoside-diphosphate reductase complex"/>
    <property type="evidence" value="ECO:0000318"/>
    <property type="project" value="GO_Central"/>
</dbReference>
<dbReference type="GO" id="GO:0005524">
    <property type="term" value="F:ATP binding"/>
    <property type="evidence" value="ECO:0000318"/>
    <property type="project" value="GO_Central"/>
</dbReference>
<dbReference type="GO" id="GO:0004748">
    <property type="term" value="F:ribonucleoside-diphosphate reductase activity, thioredoxin disulfide as acceptor"/>
    <property type="evidence" value="ECO:0000318"/>
    <property type="project" value="GO_Central"/>
</dbReference>
<dbReference type="GO" id="GO:0009263">
    <property type="term" value="P:deoxyribonucleotide biosynthetic process"/>
    <property type="evidence" value="ECO:0000318"/>
    <property type="project" value="GO_Central"/>
</dbReference>
<dbReference type="CDD" id="cd01679">
    <property type="entry name" value="RNR_I"/>
    <property type="match status" value="1"/>
</dbReference>
<dbReference type="FunFam" id="1.10.1650.20:FF:000002">
    <property type="entry name" value="Ribonucleoside-diphosphate reductase"/>
    <property type="match status" value="1"/>
</dbReference>
<dbReference type="Gene3D" id="1.10.1650.20">
    <property type="match status" value="1"/>
</dbReference>
<dbReference type="Gene3D" id="3.20.70.20">
    <property type="match status" value="1"/>
</dbReference>
<dbReference type="InterPro" id="IPR013346">
    <property type="entry name" value="NrdE_NrdA_C"/>
</dbReference>
<dbReference type="InterPro" id="IPR026459">
    <property type="entry name" value="RNR_1b_NrdE"/>
</dbReference>
<dbReference type="InterPro" id="IPR000788">
    <property type="entry name" value="RNR_lg_C"/>
</dbReference>
<dbReference type="InterPro" id="IPR013509">
    <property type="entry name" value="RNR_lsu_N"/>
</dbReference>
<dbReference type="InterPro" id="IPR013554">
    <property type="entry name" value="RNR_N"/>
</dbReference>
<dbReference type="InterPro" id="IPR008926">
    <property type="entry name" value="RNR_R1-su_N"/>
</dbReference>
<dbReference type="InterPro" id="IPR039718">
    <property type="entry name" value="Rrm1"/>
</dbReference>
<dbReference type="NCBIfam" id="TIGR02506">
    <property type="entry name" value="NrdE_NrdA"/>
    <property type="match status" value="1"/>
</dbReference>
<dbReference type="NCBIfam" id="TIGR04170">
    <property type="entry name" value="RNR_1b_NrdE"/>
    <property type="match status" value="1"/>
</dbReference>
<dbReference type="PANTHER" id="PTHR11573:SF30">
    <property type="entry name" value="RIBONUCLEOSIDE-DIPHOSPHATE REDUCTASE 2 SUBUNIT ALPHA"/>
    <property type="match status" value="1"/>
</dbReference>
<dbReference type="PANTHER" id="PTHR11573">
    <property type="entry name" value="RIBONUCLEOSIDE-DIPHOSPHATE REDUCTASE LARGE CHAIN"/>
    <property type="match status" value="1"/>
</dbReference>
<dbReference type="Pfam" id="PF02867">
    <property type="entry name" value="Ribonuc_red_lgC"/>
    <property type="match status" value="1"/>
</dbReference>
<dbReference type="Pfam" id="PF00317">
    <property type="entry name" value="Ribonuc_red_lgN"/>
    <property type="match status" value="1"/>
</dbReference>
<dbReference type="Pfam" id="PF08343">
    <property type="entry name" value="RNR_N"/>
    <property type="match status" value="1"/>
</dbReference>
<dbReference type="PRINTS" id="PR01183">
    <property type="entry name" value="RIBORDTASEM1"/>
</dbReference>
<dbReference type="SUPFAM" id="SSF51998">
    <property type="entry name" value="PFL-like glycyl radical enzymes"/>
    <property type="match status" value="1"/>
</dbReference>
<dbReference type="SUPFAM" id="SSF48168">
    <property type="entry name" value="R1 subunit of ribonucleotide reductase, N-terminal domain"/>
    <property type="match status" value="1"/>
</dbReference>
<dbReference type="PROSITE" id="PS00089">
    <property type="entry name" value="RIBORED_LARGE"/>
    <property type="match status" value="1"/>
</dbReference>